<accession>A8ZSE7</accession>
<protein>
    <recommendedName>
        <fullName evidence="1">Probable endonuclease 4</fullName>
        <ecNumber evidence="1">3.1.21.2</ecNumber>
    </recommendedName>
    <alternativeName>
        <fullName evidence="1">Endodeoxyribonuclease IV</fullName>
    </alternativeName>
    <alternativeName>
        <fullName evidence="1">Endonuclease IV</fullName>
    </alternativeName>
</protein>
<sequence length="283" mass="31605">MKYVGAHVSAAGGVENAPLAAARIRARAFALFTKNQRQWRAAPLKEESITAFKRNCADHGYRPDHILPHDSYLINLGHPEADNLKKSRTAFFDEMKRCEQLGLKFLNFHPGSHLGKISEDACLSRIAESVNMALDRTASVCAVIENTAGQGTNLGHRFEHLARVIDQVEDKTRVGVCLDTCHTFAAGYDLRTASTYEATLKAFDRVVGLKYLRAVHLNDSIKGLASRVDRHQSLGQGALGLDVFRRIMNDRRFENMPLILETKDATIWEQEIKLLYGMIKGAK</sequence>
<comment type="function">
    <text evidence="1">Endonuclease IV plays a role in DNA repair. It cleaves phosphodiester bonds at apurinic or apyrimidinic (AP) sites, generating a 3'-hydroxyl group and a 5'-terminal sugar phosphate.</text>
</comment>
<comment type="catalytic activity">
    <reaction evidence="1">
        <text>Endonucleolytic cleavage to 5'-phosphooligonucleotide end-products.</text>
        <dbReference type="EC" id="3.1.21.2"/>
    </reaction>
</comment>
<comment type="cofactor">
    <cofactor evidence="1">
        <name>Zn(2+)</name>
        <dbReference type="ChEBI" id="CHEBI:29105"/>
    </cofactor>
    <text evidence="1">Binds 3 Zn(2+) ions.</text>
</comment>
<comment type="similarity">
    <text evidence="1">Belongs to the AP endonuclease 2 family.</text>
</comment>
<name>END4_DESOH</name>
<dbReference type="EC" id="3.1.21.2" evidence="1"/>
<dbReference type="EMBL" id="CP000859">
    <property type="protein sequence ID" value="ABW67684.1"/>
    <property type="molecule type" value="Genomic_DNA"/>
</dbReference>
<dbReference type="RefSeq" id="WP_012175296.1">
    <property type="nucleotide sequence ID" value="NC_009943.1"/>
</dbReference>
<dbReference type="SMR" id="A8ZSE7"/>
<dbReference type="STRING" id="96561.Dole_1880"/>
<dbReference type="KEGG" id="dol:Dole_1880"/>
<dbReference type="eggNOG" id="COG0648">
    <property type="taxonomic scope" value="Bacteria"/>
</dbReference>
<dbReference type="HOGENOM" id="CLU_025885_0_4_7"/>
<dbReference type="OrthoDB" id="9805666at2"/>
<dbReference type="Proteomes" id="UP000008561">
    <property type="component" value="Chromosome"/>
</dbReference>
<dbReference type="GO" id="GO:0008833">
    <property type="term" value="F:deoxyribonuclease IV (phage-T4-induced) activity"/>
    <property type="evidence" value="ECO:0007669"/>
    <property type="project" value="UniProtKB-UniRule"/>
</dbReference>
<dbReference type="GO" id="GO:0003677">
    <property type="term" value="F:DNA binding"/>
    <property type="evidence" value="ECO:0007669"/>
    <property type="project" value="InterPro"/>
</dbReference>
<dbReference type="GO" id="GO:0003906">
    <property type="term" value="F:DNA-(apurinic or apyrimidinic site) endonuclease activity"/>
    <property type="evidence" value="ECO:0007669"/>
    <property type="project" value="TreeGrafter"/>
</dbReference>
<dbReference type="GO" id="GO:0008081">
    <property type="term" value="F:phosphoric diester hydrolase activity"/>
    <property type="evidence" value="ECO:0007669"/>
    <property type="project" value="TreeGrafter"/>
</dbReference>
<dbReference type="GO" id="GO:0008270">
    <property type="term" value="F:zinc ion binding"/>
    <property type="evidence" value="ECO:0007669"/>
    <property type="project" value="UniProtKB-UniRule"/>
</dbReference>
<dbReference type="GO" id="GO:0006284">
    <property type="term" value="P:base-excision repair"/>
    <property type="evidence" value="ECO:0007669"/>
    <property type="project" value="TreeGrafter"/>
</dbReference>
<dbReference type="CDD" id="cd00019">
    <property type="entry name" value="AP2Ec"/>
    <property type="match status" value="1"/>
</dbReference>
<dbReference type="FunFam" id="3.20.20.150:FF:000001">
    <property type="entry name" value="Probable endonuclease 4"/>
    <property type="match status" value="1"/>
</dbReference>
<dbReference type="Gene3D" id="3.20.20.150">
    <property type="entry name" value="Divalent-metal-dependent TIM barrel enzymes"/>
    <property type="match status" value="1"/>
</dbReference>
<dbReference type="HAMAP" id="MF_00152">
    <property type="entry name" value="Nfo"/>
    <property type="match status" value="1"/>
</dbReference>
<dbReference type="InterPro" id="IPR001719">
    <property type="entry name" value="AP_endonuc_2"/>
</dbReference>
<dbReference type="InterPro" id="IPR018246">
    <property type="entry name" value="AP_endonuc_F2_Zn_BS"/>
</dbReference>
<dbReference type="InterPro" id="IPR036237">
    <property type="entry name" value="Xyl_isomerase-like_sf"/>
</dbReference>
<dbReference type="InterPro" id="IPR013022">
    <property type="entry name" value="Xyl_isomerase-like_TIM-brl"/>
</dbReference>
<dbReference type="NCBIfam" id="TIGR00587">
    <property type="entry name" value="nfo"/>
    <property type="match status" value="1"/>
</dbReference>
<dbReference type="NCBIfam" id="NF002199">
    <property type="entry name" value="PRK01060.1-4"/>
    <property type="match status" value="1"/>
</dbReference>
<dbReference type="PANTHER" id="PTHR21445:SF0">
    <property type="entry name" value="APURINIC-APYRIMIDINIC ENDONUCLEASE"/>
    <property type="match status" value="1"/>
</dbReference>
<dbReference type="PANTHER" id="PTHR21445">
    <property type="entry name" value="ENDONUCLEASE IV ENDODEOXYRIBONUCLEASE IV"/>
    <property type="match status" value="1"/>
</dbReference>
<dbReference type="Pfam" id="PF01261">
    <property type="entry name" value="AP_endonuc_2"/>
    <property type="match status" value="1"/>
</dbReference>
<dbReference type="SMART" id="SM00518">
    <property type="entry name" value="AP2Ec"/>
    <property type="match status" value="1"/>
</dbReference>
<dbReference type="SUPFAM" id="SSF51658">
    <property type="entry name" value="Xylose isomerase-like"/>
    <property type="match status" value="1"/>
</dbReference>
<dbReference type="PROSITE" id="PS00729">
    <property type="entry name" value="AP_NUCLEASE_F2_1"/>
    <property type="match status" value="1"/>
</dbReference>
<dbReference type="PROSITE" id="PS00730">
    <property type="entry name" value="AP_NUCLEASE_F2_2"/>
    <property type="match status" value="1"/>
</dbReference>
<dbReference type="PROSITE" id="PS00731">
    <property type="entry name" value="AP_NUCLEASE_F2_3"/>
    <property type="match status" value="1"/>
</dbReference>
<dbReference type="PROSITE" id="PS51432">
    <property type="entry name" value="AP_NUCLEASE_F2_4"/>
    <property type="match status" value="1"/>
</dbReference>
<gene>
    <name evidence="1" type="primary">nfo</name>
    <name type="ordered locus">Dole_1880</name>
</gene>
<organism>
    <name type="scientific">Desulfosudis oleivorans (strain DSM 6200 / JCM 39069 / Hxd3)</name>
    <name type="common">Desulfococcus oleovorans</name>
    <dbReference type="NCBI Taxonomy" id="96561"/>
    <lineage>
        <taxon>Bacteria</taxon>
        <taxon>Pseudomonadati</taxon>
        <taxon>Thermodesulfobacteriota</taxon>
        <taxon>Desulfobacteria</taxon>
        <taxon>Desulfobacterales</taxon>
        <taxon>Desulfosudaceae</taxon>
        <taxon>Desulfosudis</taxon>
    </lineage>
</organism>
<keyword id="KW-0227">DNA damage</keyword>
<keyword id="KW-0234">DNA repair</keyword>
<keyword id="KW-0255">Endonuclease</keyword>
<keyword id="KW-0378">Hydrolase</keyword>
<keyword id="KW-0479">Metal-binding</keyword>
<keyword id="KW-0540">Nuclease</keyword>
<keyword id="KW-1185">Reference proteome</keyword>
<keyword id="KW-0862">Zinc</keyword>
<reference key="1">
    <citation type="submission" date="2007-10" db="EMBL/GenBank/DDBJ databases">
        <title>Complete sequence of Desulfococcus oleovorans Hxd3.</title>
        <authorList>
            <consortium name="US DOE Joint Genome Institute"/>
            <person name="Copeland A."/>
            <person name="Lucas S."/>
            <person name="Lapidus A."/>
            <person name="Barry K."/>
            <person name="Glavina del Rio T."/>
            <person name="Dalin E."/>
            <person name="Tice H."/>
            <person name="Pitluck S."/>
            <person name="Kiss H."/>
            <person name="Brettin T."/>
            <person name="Bruce D."/>
            <person name="Detter J.C."/>
            <person name="Han C."/>
            <person name="Schmutz J."/>
            <person name="Larimer F."/>
            <person name="Land M."/>
            <person name="Hauser L."/>
            <person name="Kyrpides N."/>
            <person name="Kim E."/>
            <person name="Wawrik B."/>
            <person name="Richardson P."/>
        </authorList>
    </citation>
    <scope>NUCLEOTIDE SEQUENCE [LARGE SCALE GENOMIC DNA]</scope>
    <source>
        <strain>DSM 6200 / JCM 39069 / Hxd3</strain>
    </source>
</reference>
<proteinExistence type="inferred from homology"/>
<feature type="chain" id="PRO_1000096878" description="Probable endonuclease 4">
    <location>
        <begin position="1"/>
        <end position="283"/>
    </location>
</feature>
<feature type="binding site" evidence="1">
    <location>
        <position position="69"/>
    </location>
    <ligand>
        <name>Zn(2+)</name>
        <dbReference type="ChEBI" id="CHEBI:29105"/>
        <label>1</label>
    </ligand>
</feature>
<feature type="binding site" evidence="1">
    <location>
        <position position="109"/>
    </location>
    <ligand>
        <name>Zn(2+)</name>
        <dbReference type="ChEBI" id="CHEBI:29105"/>
        <label>1</label>
    </ligand>
</feature>
<feature type="binding site" evidence="1">
    <location>
        <position position="145"/>
    </location>
    <ligand>
        <name>Zn(2+)</name>
        <dbReference type="ChEBI" id="CHEBI:29105"/>
        <label>1</label>
    </ligand>
</feature>
<feature type="binding site" evidence="1">
    <location>
        <position position="145"/>
    </location>
    <ligand>
        <name>Zn(2+)</name>
        <dbReference type="ChEBI" id="CHEBI:29105"/>
        <label>2</label>
    </ligand>
</feature>
<feature type="binding site" evidence="1">
    <location>
        <position position="179"/>
    </location>
    <ligand>
        <name>Zn(2+)</name>
        <dbReference type="ChEBI" id="CHEBI:29105"/>
        <label>2</label>
    </ligand>
</feature>
<feature type="binding site" evidence="1">
    <location>
        <position position="182"/>
    </location>
    <ligand>
        <name>Zn(2+)</name>
        <dbReference type="ChEBI" id="CHEBI:29105"/>
        <label>3</label>
    </ligand>
</feature>
<feature type="binding site" evidence="1">
    <location>
        <position position="216"/>
    </location>
    <ligand>
        <name>Zn(2+)</name>
        <dbReference type="ChEBI" id="CHEBI:29105"/>
        <label>2</label>
    </ligand>
</feature>
<feature type="binding site" evidence="1">
    <location>
        <position position="229"/>
    </location>
    <ligand>
        <name>Zn(2+)</name>
        <dbReference type="ChEBI" id="CHEBI:29105"/>
        <label>3</label>
    </ligand>
</feature>
<feature type="binding site" evidence="1">
    <location>
        <position position="231"/>
    </location>
    <ligand>
        <name>Zn(2+)</name>
        <dbReference type="ChEBI" id="CHEBI:29105"/>
        <label>3</label>
    </ligand>
</feature>
<feature type="binding site" evidence="1">
    <location>
        <position position="261"/>
    </location>
    <ligand>
        <name>Zn(2+)</name>
        <dbReference type="ChEBI" id="CHEBI:29105"/>
        <label>2</label>
    </ligand>
</feature>
<evidence type="ECO:0000255" key="1">
    <source>
        <dbReference type="HAMAP-Rule" id="MF_00152"/>
    </source>
</evidence>